<organism>
    <name type="scientific">Mycobacterium avium (strain 104)</name>
    <dbReference type="NCBI Taxonomy" id="243243"/>
    <lineage>
        <taxon>Bacteria</taxon>
        <taxon>Bacillati</taxon>
        <taxon>Actinomycetota</taxon>
        <taxon>Actinomycetes</taxon>
        <taxon>Mycobacteriales</taxon>
        <taxon>Mycobacteriaceae</taxon>
        <taxon>Mycobacterium</taxon>
        <taxon>Mycobacterium avium complex (MAC)</taxon>
    </lineage>
</organism>
<gene>
    <name type="ordered locus">MAV_3752</name>
</gene>
<feature type="chain" id="PRO_0000336204" description="UPF0102 protein MAV_3752">
    <location>
        <begin position="1"/>
        <end position="128"/>
    </location>
</feature>
<reference key="1">
    <citation type="submission" date="2006-10" db="EMBL/GenBank/DDBJ databases">
        <authorList>
            <person name="Fleischmann R.D."/>
            <person name="Dodson R.J."/>
            <person name="Haft D.H."/>
            <person name="Merkel J.S."/>
            <person name="Nelson W.C."/>
            <person name="Fraser C.M."/>
        </authorList>
    </citation>
    <scope>NUCLEOTIDE SEQUENCE [LARGE SCALE GENOMIC DNA]</scope>
    <source>
        <strain>104</strain>
    </source>
</reference>
<protein>
    <recommendedName>
        <fullName evidence="1">UPF0102 protein MAV_3752</fullName>
    </recommendedName>
</protein>
<comment type="similarity">
    <text evidence="1">Belongs to the UPF0102 family.</text>
</comment>
<accession>A0QJ36</accession>
<sequence>MAAMTTETTMTRIQLGAMGEALAVDHLTRMGLRVLHRNWRCRYGELDIIACDDATSTVVFVEVKTRTGDGYGGLPQAVTPRKVRRLRRLAGLWLAGQDRRWAAIRIDVIGVRVGRRRTPEITHLQGIG</sequence>
<evidence type="ECO:0000255" key="1">
    <source>
        <dbReference type="HAMAP-Rule" id="MF_00048"/>
    </source>
</evidence>
<name>Y3752_MYCA1</name>
<dbReference type="EMBL" id="CP000479">
    <property type="protein sequence ID" value="ABK65778.1"/>
    <property type="molecule type" value="Genomic_DNA"/>
</dbReference>
<dbReference type="SMR" id="A0QJ36"/>
<dbReference type="KEGG" id="mav:MAV_3752"/>
<dbReference type="HOGENOM" id="CLU_115353_2_3_11"/>
<dbReference type="Proteomes" id="UP000001574">
    <property type="component" value="Chromosome"/>
</dbReference>
<dbReference type="GO" id="GO:0003676">
    <property type="term" value="F:nucleic acid binding"/>
    <property type="evidence" value="ECO:0007669"/>
    <property type="project" value="InterPro"/>
</dbReference>
<dbReference type="CDD" id="cd20736">
    <property type="entry name" value="PoNe_Nuclease"/>
    <property type="match status" value="1"/>
</dbReference>
<dbReference type="Gene3D" id="3.40.1350.10">
    <property type="match status" value="1"/>
</dbReference>
<dbReference type="HAMAP" id="MF_00048">
    <property type="entry name" value="UPF0102"/>
    <property type="match status" value="1"/>
</dbReference>
<dbReference type="InterPro" id="IPR011335">
    <property type="entry name" value="Restrct_endonuc-II-like"/>
</dbReference>
<dbReference type="InterPro" id="IPR011856">
    <property type="entry name" value="tRNA_endonuc-like_dom_sf"/>
</dbReference>
<dbReference type="InterPro" id="IPR003509">
    <property type="entry name" value="UPF0102_YraN-like"/>
</dbReference>
<dbReference type="NCBIfam" id="NF009150">
    <property type="entry name" value="PRK12497.1-3"/>
    <property type="match status" value="1"/>
</dbReference>
<dbReference type="NCBIfam" id="NF009153">
    <property type="entry name" value="PRK12497.3-1"/>
    <property type="match status" value="1"/>
</dbReference>
<dbReference type="NCBIfam" id="NF009154">
    <property type="entry name" value="PRK12497.3-3"/>
    <property type="match status" value="1"/>
</dbReference>
<dbReference type="NCBIfam" id="TIGR00252">
    <property type="entry name" value="YraN family protein"/>
    <property type="match status" value="1"/>
</dbReference>
<dbReference type="PANTHER" id="PTHR34039">
    <property type="entry name" value="UPF0102 PROTEIN YRAN"/>
    <property type="match status" value="1"/>
</dbReference>
<dbReference type="PANTHER" id="PTHR34039:SF1">
    <property type="entry name" value="UPF0102 PROTEIN YRAN"/>
    <property type="match status" value="1"/>
</dbReference>
<dbReference type="Pfam" id="PF02021">
    <property type="entry name" value="UPF0102"/>
    <property type="match status" value="1"/>
</dbReference>
<dbReference type="SUPFAM" id="SSF52980">
    <property type="entry name" value="Restriction endonuclease-like"/>
    <property type="match status" value="1"/>
</dbReference>
<proteinExistence type="inferred from homology"/>